<name>RS10_PSEPF</name>
<protein>
    <recommendedName>
        <fullName evidence="1">Small ribosomal subunit protein uS10</fullName>
    </recommendedName>
    <alternativeName>
        <fullName evidence="2">30S ribosomal protein S10</fullName>
    </alternativeName>
</protein>
<sequence>MQNQQIRIRLKAFDHRLIDQSTQEIVETAKRTGAQVRGPIPLPTRKERFTVLVSPHVNKDARDQYEIRTHKRVLDIVQPTDKTVDALMKLDLAAGVEVQISLG</sequence>
<accession>Q3K5Y7</accession>
<comment type="function">
    <text evidence="1">Involved in the binding of tRNA to the ribosomes.</text>
</comment>
<comment type="subunit">
    <text evidence="1">Part of the 30S ribosomal subunit.</text>
</comment>
<comment type="similarity">
    <text evidence="1">Belongs to the universal ribosomal protein uS10 family.</text>
</comment>
<reference key="1">
    <citation type="journal article" date="2009" name="Genome Biol.">
        <title>Genomic and genetic analyses of diversity and plant interactions of Pseudomonas fluorescens.</title>
        <authorList>
            <person name="Silby M.W."/>
            <person name="Cerdeno-Tarraga A.M."/>
            <person name="Vernikos G.S."/>
            <person name="Giddens S.R."/>
            <person name="Jackson R.W."/>
            <person name="Preston G.M."/>
            <person name="Zhang X.-X."/>
            <person name="Moon C.D."/>
            <person name="Gehrig S.M."/>
            <person name="Godfrey S.A.C."/>
            <person name="Knight C.G."/>
            <person name="Malone J.G."/>
            <person name="Robinson Z."/>
            <person name="Spiers A.J."/>
            <person name="Harris S."/>
            <person name="Challis G.L."/>
            <person name="Yaxley A.M."/>
            <person name="Harris D."/>
            <person name="Seeger K."/>
            <person name="Murphy L."/>
            <person name="Rutter S."/>
            <person name="Squares R."/>
            <person name="Quail M.A."/>
            <person name="Saunders E."/>
            <person name="Mavromatis K."/>
            <person name="Brettin T.S."/>
            <person name="Bentley S.D."/>
            <person name="Hothersall J."/>
            <person name="Stephens E."/>
            <person name="Thomas C.M."/>
            <person name="Parkhill J."/>
            <person name="Levy S.B."/>
            <person name="Rainey P.B."/>
            <person name="Thomson N.R."/>
        </authorList>
    </citation>
    <scope>NUCLEOTIDE SEQUENCE [LARGE SCALE GENOMIC DNA]</scope>
    <source>
        <strain>Pf0-1</strain>
    </source>
</reference>
<proteinExistence type="inferred from homology"/>
<evidence type="ECO:0000255" key="1">
    <source>
        <dbReference type="HAMAP-Rule" id="MF_00508"/>
    </source>
</evidence>
<evidence type="ECO:0000305" key="2"/>
<dbReference type="EMBL" id="CP000094">
    <property type="protein sequence ID" value="ABA76817.1"/>
    <property type="molecule type" value="Genomic_DNA"/>
</dbReference>
<dbReference type="RefSeq" id="WP_003186070.1">
    <property type="nucleotide sequence ID" value="NC_007492.2"/>
</dbReference>
<dbReference type="SMR" id="Q3K5Y7"/>
<dbReference type="GeneID" id="98636782"/>
<dbReference type="KEGG" id="pfo:Pfl01_5080"/>
<dbReference type="eggNOG" id="COG0051">
    <property type="taxonomic scope" value="Bacteria"/>
</dbReference>
<dbReference type="HOGENOM" id="CLU_122625_1_3_6"/>
<dbReference type="Proteomes" id="UP000002704">
    <property type="component" value="Chromosome"/>
</dbReference>
<dbReference type="GO" id="GO:1990904">
    <property type="term" value="C:ribonucleoprotein complex"/>
    <property type="evidence" value="ECO:0007669"/>
    <property type="project" value="UniProtKB-KW"/>
</dbReference>
<dbReference type="GO" id="GO:0005840">
    <property type="term" value="C:ribosome"/>
    <property type="evidence" value="ECO:0007669"/>
    <property type="project" value="UniProtKB-KW"/>
</dbReference>
<dbReference type="GO" id="GO:0003735">
    <property type="term" value="F:structural constituent of ribosome"/>
    <property type="evidence" value="ECO:0007669"/>
    <property type="project" value="InterPro"/>
</dbReference>
<dbReference type="GO" id="GO:0000049">
    <property type="term" value="F:tRNA binding"/>
    <property type="evidence" value="ECO:0007669"/>
    <property type="project" value="UniProtKB-UniRule"/>
</dbReference>
<dbReference type="GO" id="GO:0006412">
    <property type="term" value="P:translation"/>
    <property type="evidence" value="ECO:0007669"/>
    <property type="project" value="UniProtKB-UniRule"/>
</dbReference>
<dbReference type="FunFam" id="3.30.70.600:FF:000001">
    <property type="entry name" value="30S ribosomal protein S10"/>
    <property type="match status" value="1"/>
</dbReference>
<dbReference type="Gene3D" id="3.30.70.600">
    <property type="entry name" value="Ribosomal protein S10 domain"/>
    <property type="match status" value="1"/>
</dbReference>
<dbReference type="HAMAP" id="MF_00508">
    <property type="entry name" value="Ribosomal_uS10"/>
    <property type="match status" value="1"/>
</dbReference>
<dbReference type="InterPro" id="IPR001848">
    <property type="entry name" value="Ribosomal_uS10"/>
</dbReference>
<dbReference type="InterPro" id="IPR018268">
    <property type="entry name" value="Ribosomal_uS10_CS"/>
</dbReference>
<dbReference type="InterPro" id="IPR027486">
    <property type="entry name" value="Ribosomal_uS10_dom"/>
</dbReference>
<dbReference type="InterPro" id="IPR036838">
    <property type="entry name" value="Ribosomal_uS10_dom_sf"/>
</dbReference>
<dbReference type="NCBIfam" id="NF001861">
    <property type="entry name" value="PRK00596.1"/>
    <property type="match status" value="1"/>
</dbReference>
<dbReference type="NCBIfam" id="TIGR01049">
    <property type="entry name" value="rpsJ_bact"/>
    <property type="match status" value="1"/>
</dbReference>
<dbReference type="PANTHER" id="PTHR11700">
    <property type="entry name" value="30S RIBOSOMAL PROTEIN S10 FAMILY MEMBER"/>
    <property type="match status" value="1"/>
</dbReference>
<dbReference type="Pfam" id="PF00338">
    <property type="entry name" value="Ribosomal_S10"/>
    <property type="match status" value="1"/>
</dbReference>
<dbReference type="PRINTS" id="PR00971">
    <property type="entry name" value="RIBOSOMALS10"/>
</dbReference>
<dbReference type="SMART" id="SM01403">
    <property type="entry name" value="Ribosomal_S10"/>
    <property type="match status" value="1"/>
</dbReference>
<dbReference type="SUPFAM" id="SSF54999">
    <property type="entry name" value="Ribosomal protein S10"/>
    <property type="match status" value="1"/>
</dbReference>
<dbReference type="PROSITE" id="PS00361">
    <property type="entry name" value="RIBOSOMAL_S10"/>
    <property type="match status" value="1"/>
</dbReference>
<keyword id="KW-0687">Ribonucleoprotein</keyword>
<keyword id="KW-0689">Ribosomal protein</keyword>
<gene>
    <name evidence="1" type="primary">rpsJ</name>
    <name type="ordered locus">Pfl01_5080</name>
</gene>
<organism>
    <name type="scientific">Pseudomonas fluorescens (strain Pf0-1)</name>
    <dbReference type="NCBI Taxonomy" id="205922"/>
    <lineage>
        <taxon>Bacteria</taxon>
        <taxon>Pseudomonadati</taxon>
        <taxon>Pseudomonadota</taxon>
        <taxon>Gammaproteobacteria</taxon>
        <taxon>Pseudomonadales</taxon>
        <taxon>Pseudomonadaceae</taxon>
        <taxon>Pseudomonas</taxon>
    </lineage>
</organism>
<feature type="chain" id="PRO_0000237081" description="Small ribosomal subunit protein uS10">
    <location>
        <begin position="1"/>
        <end position="103"/>
    </location>
</feature>